<keyword id="KW-0002">3D-structure</keyword>
<keyword id="KW-0963">Cytoplasm</keyword>
<keyword id="KW-0520">NAD</keyword>
<keyword id="KW-0560">Oxidoreductase</keyword>
<keyword id="KW-1185">Reference proteome</keyword>
<keyword id="KW-0816">Tricarboxylic acid cycle</keyword>
<evidence type="ECO:0000250" key="1">
    <source>
        <dbReference type="UniProtKB" id="P61889"/>
    </source>
</evidence>
<evidence type="ECO:0000269" key="2">
    <source>
    </source>
</evidence>
<evidence type="ECO:0000269" key="3">
    <source>
    </source>
</evidence>
<evidence type="ECO:0000303" key="4">
    <source>
    </source>
</evidence>
<evidence type="ECO:0000305" key="5"/>
<evidence type="ECO:0007829" key="6">
    <source>
        <dbReference type="PDB" id="2X0J"/>
    </source>
</evidence>
<accession>O08349</accession>
<feature type="chain" id="PRO_0000113480" description="Malate dehydrogenase">
    <location>
        <begin position="1"/>
        <end position="294"/>
    </location>
</feature>
<feature type="active site" description="Proton acceptor" evidence="1">
    <location>
        <position position="172"/>
    </location>
</feature>
<feature type="binding site" evidence="2">
    <location>
        <begin position="7"/>
        <end position="12"/>
    </location>
    <ligand>
        <name>NAD(+)</name>
        <dbReference type="ChEBI" id="CHEBI:57540"/>
    </ligand>
</feature>
<feature type="binding site" evidence="2">
    <location>
        <position position="32"/>
    </location>
    <ligand>
        <name>NAD(+)</name>
        <dbReference type="ChEBI" id="CHEBI:57540"/>
    </ligand>
</feature>
<feature type="binding site" evidence="1">
    <location>
        <position position="81"/>
    </location>
    <ligand>
        <name>substrate</name>
    </ligand>
</feature>
<feature type="binding site" evidence="1">
    <location>
        <position position="87"/>
    </location>
    <ligand>
        <name>substrate</name>
    </ligand>
</feature>
<feature type="binding site" evidence="2">
    <location>
        <position position="94"/>
    </location>
    <ligand>
        <name>NAD(+)</name>
        <dbReference type="ChEBI" id="CHEBI:57540"/>
    </ligand>
</feature>
<feature type="binding site" evidence="2">
    <location>
        <begin position="117"/>
        <end position="119"/>
    </location>
    <ligand>
        <name>NAD(+)</name>
        <dbReference type="ChEBI" id="CHEBI:57540"/>
    </ligand>
</feature>
<feature type="binding site" evidence="1">
    <location>
        <position position="119"/>
    </location>
    <ligand>
        <name>substrate</name>
    </ligand>
</feature>
<feature type="binding site" evidence="1">
    <location>
        <position position="150"/>
    </location>
    <ligand>
        <name>substrate</name>
    </ligand>
</feature>
<feature type="strand" evidence="6">
    <location>
        <begin position="2"/>
        <end position="6"/>
    </location>
</feature>
<feature type="helix" evidence="6">
    <location>
        <begin position="10"/>
        <end position="22"/>
    </location>
</feature>
<feature type="strand" evidence="6">
    <location>
        <begin position="26"/>
        <end position="31"/>
    </location>
</feature>
<feature type="helix" evidence="6">
    <location>
        <begin position="35"/>
        <end position="49"/>
    </location>
</feature>
<feature type="helix" evidence="6">
    <location>
        <begin position="50"/>
        <end position="52"/>
    </location>
</feature>
<feature type="strand" evidence="6">
    <location>
        <begin position="57"/>
        <end position="62"/>
    </location>
</feature>
<feature type="helix" evidence="6">
    <location>
        <begin position="64"/>
        <end position="67"/>
    </location>
</feature>
<feature type="strand" evidence="6">
    <location>
        <begin position="71"/>
        <end position="75"/>
    </location>
</feature>
<feature type="strand" evidence="6">
    <location>
        <begin position="83"/>
        <end position="85"/>
    </location>
</feature>
<feature type="helix" evidence="6">
    <location>
        <begin position="87"/>
        <end position="106"/>
    </location>
</feature>
<feature type="strand" evidence="6">
    <location>
        <begin position="113"/>
        <end position="116"/>
    </location>
</feature>
<feature type="strand" evidence="6">
    <location>
        <begin position="118"/>
        <end position="120"/>
    </location>
</feature>
<feature type="helix" evidence="6">
    <location>
        <begin position="121"/>
        <end position="131"/>
    </location>
</feature>
<feature type="strand" evidence="6">
    <location>
        <begin position="138"/>
        <end position="141"/>
    </location>
</feature>
<feature type="helix" evidence="6">
    <location>
        <begin position="144"/>
        <end position="157"/>
    </location>
</feature>
<feature type="strand" evidence="6">
    <location>
        <begin position="161"/>
        <end position="163"/>
    </location>
</feature>
<feature type="strand" evidence="6">
    <location>
        <begin position="168"/>
        <end position="170"/>
    </location>
</feature>
<feature type="helix" evidence="6">
    <location>
        <begin position="180"/>
        <end position="182"/>
    </location>
</feature>
<feature type="strand" evidence="6">
    <location>
        <begin position="185"/>
        <end position="187"/>
    </location>
</feature>
<feature type="helix" evidence="6">
    <location>
        <begin position="191"/>
        <end position="199"/>
    </location>
</feature>
<feature type="helix" evidence="6">
    <location>
        <begin position="201"/>
        <end position="209"/>
    </location>
</feature>
<feature type="helix" evidence="6">
    <location>
        <begin position="214"/>
        <end position="228"/>
    </location>
</feature>
<feature type="strand" evidence="6">
    <location>
        <begin position="234"/>
        <end position="243"/>
    </location>
</feature>
<feature type="helix" evidence="6">
    <location>
        <begin position="244"/>
        <end position="246"/>
    </location>
</feature>
<feature type="strand" evidence="6">
    <location>
        <begin position="248"/>
        <end position="259"/>
    </location>
</feature>
<feature type="strand" evidence="6">
    <location>
        <begin position="262"/>
        <end position="265"/>
    </location>
</feature>
<feature type="helix" evidence="6">
    <location>
        <begin position="272"/>
        <end position="290"/>
    </location>
</feature>
<feature type="turn" evidence="6">
    <location>
        <begin position="291"/>
        <end position="293"/>
    </location>
</feature>
<reference key="1">
    <citation type="journal article" date="1997" name="Arch. Microbiol.">
        <title>Properties and primary structure of a thermostable L-malate dehydrogenase from Archaeoglobus fulgidus.</title>
        <authorList>
            <person name="Langelandsvik A.S."/>
            <person name="Steen I.H."/>
            <person name="Birkeland N.K."/>
            <person name="Lien T."/>
        </authorList>
    </citation>
    <scope>NUCLEOTIDE SEQUENCE [GENOMIC DNA]</scope>
    <scope>CHARACTERIZATION</scope>
    <source>
        <strain>ATCC 49558 / DSM 4304 / JCM 9628 / NBRC 100126 / VC-16</strain>
    </source>
</reference>
<reference key="2">
    <citation type="journal article" date="1997" name="Nature">
        <title>The complete genome sequence of the hyperthermophilic, sulphate-reducing archaeon Archaeoglobus fulgidus.</title>
        <authorList>
            <person name="Klenk H.-P."/>
            <person name="Clayton R.A."/>
            <person name="Tomb J.-F."/>
            <person name="White O."/>
            <person name="Nelson K.E."/>
            <person name="Ketchum K.A."/>
            <person name="Dodson R.J."/>
            <person name="Gwinn M.L."/>
            <person name="Hickey E.K."/>
            <person name="Peterson J.D."/>
            <person name="Richardson D.L."/>
            <person name="Kerlavage A.R."/>
            <person name="Graham D.E."/>
            <person name="Kyrpides N.C."/>
            <person name="Fleischmann R.D."/>
            <person name="Quackenbush J."/>
            <person name="Lee N.H."/>
            <person name="Sutton G.G."/>
            <person name="Gill S.R."/>
            <person name="Kirkness E.F."/>
            <person name="Dougherty B.A."/>
            <person name="McKenney K."/>
            <person name="Adams M.D."/>
            <person name="Loftus B.J."/>
            <person name="Peterson S.N."/>
            <person name="Reich C.I."/>
            <person name="McNeil L.K."/>
            <person name="Badger J.H."/>
            <person name="Glodek A."/>
            <person name="Zhou L."/>
            <person name="Overbeek R."/>
            <person name="Gocayne J.D."/>
            <person name="Weidman J.F."/>
            <person name="McDonald L.A."/>
            <person name="Utterback T.R."/>
            <person name="Cotton M.D."/>
            <person name="Spriggs T."/>
            <person name="Artiach P."/>
            <person name="Kaine B.P."/>
            <person name="Sykes S.M."/>
            <person name="Sadow P.W."/>
            <person name="D'Andrea K.P."/>
            <person name="Bowman C."/>
            <person name="Fujii C."/>
            <person name="Garland S.A."/>
            <person name="Mason T.M."/>
            <person name="Olsen G.J."/>
            <person name="Fraser C.M."/>
            <person name="Smith H.O."/>
            <person name="Woese C.R."/>
            <person name="Venter J.C."/>
        </authorList>
    </citation>
    <scope>NUCLEOTIDE SEQUENCE [LARGE SCALE GENOMIC DNA]</scope>
    <source>
        <strain>ATCC 49558 / DSM 4304 / JCM 9628 / NBRC 100126 / VC-16</strain>
    </source>
</reference>
<reference key="3">
    <citation type="journal article" date="2009" name="Biochim. Biophys. Acta">
        <title>Refolding, characterization and crystal structure of (S)-malate dehydrogenase from the hyperthermophilic archaeon Aeropyrum pernix.</title>
        <authorList>
            <person name="Kawakami R."/>
            <person name="Sakuraba H."/>
            <person name="Goda S."/>
            <person name="Tsuge H."/>
            <person name="Ohshima T."/>
        </authorList>
    </citation>
    <scope>FUNCTION</scope>
    <scope>CATALYTIC ACTIVITY</scope>
    <scope>BIOPHYSICOCHEMICAL PROPERTIES</scope>
</reference>
<reference key="4">
    <citation type="journal article" date="2004" name="J. Mol. Biol.">
        <title>The 2.9A resolution crystal structure of malate dehydrogenase from Archaeoglobus fulgidus: mechanisms of oligomerisation and thermal stabilisation.</title>
        <authorList>
            <person name="Irimia A."/>
            <person name="Vellieux F.M.D."/>
            <person name="Madern D."/>
            <person name="Zaccai G."/>
            <person name="Karshikoff A."/>
            <person name="Tibbelin G."/>
            <person name="Ladenstein R."/>
            <person name="Lien T."/>
            <person name="Birkeland N.-K."/>
        </authorList>
    </citation>
    <scope>X-RAY CRYSTALLOGRAPHY (2.79 ANGSTROMS) IN COMPLEX WITH NAD</scope>
    <scope>SUBUNIT</scope>
</reference>
<organism>
    <name type="scientific">Archaeoglobus fulgidus (strain ATCC 49558 / DSM 4304 / JCM 9628 / NBRC 100126 / VC-16)</name>
    <dbReference type="NCBI Taxonomy" id="224325"/>
    <lineage>
        <taxon>Archaea</taxon>
        <taxon>Methanobacteriati</taxon>
        <taxon>Methanobacteriota</taxon>
        <taxon>Archaeoglobi</taxon>
        <taxon>Archaeoglobales</taxon>
        <taxon>Archaeoglobaceae</taxon>
        <taxon>Archaeoglobus</taxon>
    </lineage>
</organism>
<proteinExistence type="evidence at protein level"/>
<protein>
    <recommendedName>
        <fullName evidence="4">Malate dehydrogenase</fullName>
        <ecNumber evidence="3">1.1.1.37</ecNumber>
    </recommendedName>
</protein>
<gene>
    <name type="primary">mdh</name>
    <name type="ordered locus">AF_0855</name>
</gene>
<sequence length="294" mass="31874">MKLGFVGAGRVGSTSAFTCLLNLDVDEIALVDIAEDLAVGEAMDLAHAAAGIDKYPKIVGGADYSLLKGSEIIVVTAGLARKPGMTRLDLAHKNAGIIKDIAKKIVENAPESKILVVTNPMDVMTYIMWKESGKPRNEVFGMGNQLDSQRLKERLYNAGARNIRRAWIIGEHGDSMFVAKSLADFDGEVDWEAVENDVRFVAAEVIKRKGATIFGPAVAIYRMVKAVVEDTGEIIPTSMILQGEYGIENVAVGVPAKLGKNGAEVADIKLSDEEIEKLRNSAKILRERLEELGY</sequence>
<dbReference type="EC" id="1.1.1.37" evidence="3"/>
<dbReference type="EMBL" id="Z85985">
    <property type="protein sequence ID" value="CAB06654.1"/>
    <property type="molecule type" value="Genomic_DNA"/>
</dbReference>
<dbReference type="EMBL" id="AE000782">
    <property type="protein sequence ID" value="AAB90384.1"/>
    <property type="molecule type" value="Genomic_DNA"/>
</dbReference>
<dbReference type="PIR" id="G69356">
    <property type="entry name" value="G69356"/>
</dbReference>
<dbReference type="RefSeq" id="WP_010878358.1">
    <property type="nucleotide sequence ID" value="NC_000917.1"/>
</dbReference>
<dbReference type="PDB" id="2X0I">
    <property type="method" value="X-ray"/>
    <property type="resolution" value="2.90 A"/>
    <property type="chains" value="A=1-294"/>
</dbReference>
<dbReference type="PDB" id="2X0J">
    <property type="method" value="X-ray"/>
    <property type="resolution" value="2.79 A"/>
    <property type="chains" value="A=1-294"/>
</dbReference>
<dbReference type="PDBsum" id="2X0I"/>
<dbReference type="PDBsum" id="2X0J"/>
<dbReference type="SMR" id="O08349"/>
<dbReference type="STRING" id="224325.AF_0855"/>
<dbReference type="PaxDb" id="224325-AF_0855"/>
<dbReference type="EnsemblBacteria" id="AAB90384">
    <property type="protein sequence ID" value="AAB90384"/>
    <property type="gene ID" value="AF_0855"/>
</dbReference>
<dbReference type="GeneID" id="24794453"/>
<dbReference type="KEGG" id="afu:AF_0855"/>
<dbReference type="eggNOG" id="arCOG00246">
    <property type="taxonomic scope" value="Archaea"/>
</dbReference>
<dbReference type="HOGENOM" id="CLU_045401_2_1_2"/>
<dbReference type="OrthoDB" id="2596at2157"/>
<dbReference type="PhylomeDB" id="O08349"/>
<dbReference type="BRENDA" id="1.1.1.37">
    <property type="organism ID" value="414"/>
</dbReference>
<dbReference type="BRENDA" id="1.1.1.375">
    <property type="organism ID" value="414"/>
</dbReference>
<dbReference type="EvolutionaryTrace" id="O08349"/>
<dbReference type="Proteomes" id="UP000002199">
    <property type="component" value="Chromosome"/>
</dbReference>
<dbReference type="GO" id="GO:0005737">
    <property type="term" value="C:cytoplasm"/>
    <property type="evidence" value="ECO:0007669"/>
    <property type="project" value="UniProtKB-SubCell"/>
</dbReference>
<dbReference type="GO" id="GO:0004459">
    <property type="term" value="F:L-lactate dehydrogenase activity"/>
    <property type="evidence" value="ECO:0007669"/>
    <property type="project" value="InterPro"/>
</dbReference>
<dbReference type="GO" id="GO:0030060">
    <property type="term" value="F:L-malate dehydrogenase (NAD+) activity"/>
    <property type="evidence" value="ECO:0007669"/>
    <property type="project" value="UniProtKB-EC"/>
</dbReference>
<dbReference type="GO" id="GO:0006089">
    <property type="term" value="P:lactate metabolic process"/>
    <property type="evidence" value="ECO:0007669"/>
    <property type="project" value="TreeGrafter"/>
</dbReference>
<dbReference type="GO" id="GO:0006099">
    <property type="term" value="P:tricarboxylic acid cycle"/>
    <property type="evidence" value="ECO:0007669"/>
    <property type="project" value="UniProtKB-KW"/>
</dbReference>
<dbReference type="CDD" id="cd01339">
    <property type="entry name" value="LDH-like_MDH"/>
    <property type="match status" value="1"/>
</dbReference>
<dbReference type="FunFam" id="3.40.50.720:FF:000018">
    <property type="entry name" value="Malate dehydrogenase"/>
    <property type="match status" value="1"/>
</dbReference>
<dbReference type="Gene3D" id="3.90.110.10">
    <property type="entry name" value="Lactate dehydrogenase/glycoside hydrolase, family 4, C-terminal"/>
    <property type="match status" value="1"/>
</dbReference>
<dbReference type="Gene3D" id="3.40.50.720">
    <property type="entry name" value="NAD(P)-binding Rossmann-like Domain"/>
    <property type="match status" value="1"/>
</dbReference>
<dbReference type="InterPro" id="IPR001557">
    <property type="entry name" value="L-lactate/malate_DH"/>
</dbReference>
<dbReference type="InterPro" id="IPR018177">
    <property type="entry name" value="L-lactate_DH_AS"/>
</dbReference>
<dbReference type="InterPro" id="IPR022383">
    <property type="entry name" value="Lactate/malate_DH_C"/>
</dbReference>
<dbReference type="InterPro" id="IPR001236">
    <property type="entry name" value="Lactate/malate_DH_N"/>
</dbReference>
<dbReference type="InterPro" id="IPR015955">
    <property type="entry name" value="Lactate_DH/Glyco_Ohase_4_C"/>
</dbReference>
<dbReference type="InterPro" id="IPR011275">
    <property type="entry name" value="Malate_DH_type3"/>
</dbReference>
<dbReference type="InterPro" id="IPR036291">
    <property type="entry name" value="NAD(P)-bd_dom_sf"/>
</dbReference>
<dbReference type="PANTHER" id="PTHR43128">
    <property type="entry name" value="L-2-HYDROXYCARBOXYLATE DEHYDROGENASE (NAD(P)(+))"/>
    <property type="match status" value="1"/>
</dbReference>
<dbReference type="PANTHER" id="PTHR43128:SF16">
    <property type="entry name" value="L-LACTATE DEHYDROGENASE"/>
    <property type="match status" value="1"/>
</dbReference>
<dbReference type="Pfam" id="PF02866">
    <property type="entry name" value="Ldh_1_C"/>
    <property type="match status" value="1"/>
</dbReference>
<dbReference type="Pfam" id="PF00056">
    <property type="entry name" value="Ldh_1_N"/>
    <property type="match status" value="1"/>
</dbReference>
<dbReference type="PIRSF" id="PIRSF000102">
    <property type="entry name" value="Lac_mal_DH"/>
    <property type="match status" value="1"/>
</dbReference>
<dbReference type="PRINTS" id="PR00086">
    <property type="entry name" value="LLDHDRGNASE"/>
</dbReference>
<dbReference type="SUPFAM" id="SSF56327">
    <property type="entry name" value="LDH C-terminal domain-like"/>
    <property type="match status" value="1"/>
</dbReference>
<dbReference type="SUPFAM" id="SSF51735">
    <property type="entry name" value="NAD(P)-binding Rossmann-fold domains"/>
    <property type="match status" value="1"/>
</dbReference>
<comment type="function">
    <text evidence="3">Catalyzes the reversible oxidation of malate to oxaloacetate. Can also oxidize tartrate.</text>
</comment>
<comment type="catalytic activity">
    <reaction evidence="3">
        <text>(S)-malate + NAD(+) = oxaloacetate + NADH + H(+)</text>
        <dbReference type="Rhea" id="RHEA:21432"/>
        <dbReference type="ChEBI" id="CHEBI:15378"/>
        <dbReference type="ChEBI" id="CHEBI:15589"/>
        <dbReference type="ChEBI" id="CHEBI:16452"/>
        <dbReference type="ChEBI" id="CHEBI:57540"/>
        <dbReference type="ChEBI" id="CHEBI:57945"/>
        <dbReference type="EC" id="1.1.1.37"/>
    </reaction>
</comment>
<comment type="biophysicochemical properties">
    <kinetics>
        <KM evidence="3">0.074 mM for S-malate</KM>
        <KM evidence="3">0.63 mM for (2S,3S)-tartrate</KM>
        <KM evidence="3">0.4 mM for (2S,3R)-tartrate</KM>
        <text evidence="3">kcat is 5.7 sec(-1) for NAD-dependent malate oxidation.</text>
    </kinetics>
</comment>
<comment type="subunit">
    <text evidence="2">Homodimer.</text>
</comment>
<comment type="subcellular location">
    <subcellularLocation>
        <location>Cytoplasm</location>
    </subcellularLocation>
</comment>
<comment type="similarity">
    <text evidence="5">Belongs to the LDH/MDH superfamily.</text>
</comment>
<name>MDH_ARCFU</name>